<sequence length="352" mass="38124">MVFRIASSPYTHNQRQTSRIMLLVLLAAVPGIAAQLWFFGWGTLVQILLASVSALLAEALVLKLRKQSVAATLKDNSALLTGLLLAVSIPPLAPWWMVVLGTVFAVIIAKQLYGGLGQNPFNPAMIGYVVLLISFPVQMTSWLPPHEIAVNIPGFIDAIQVIFSGHTASGGDMNTLRLGIDGISQATPLDTFKTSVRAGHSVEQIMQYPIYSGILAGAGWQWVNLAWLAGGLWLLWQKAIRWHIPLSFLVTLALCATLGWLFSPETLAAPQIHLLSGATMLGAFFILTDPVTASTTNRGRLIFGALAGLLVWLIRSFGGYPDGVAFAVLLANITVPLIDYYTRPRVYGHRKG</sequence>
<reference key="1">
    <citation type="journal article" date="2009" name="PLoS Genet.">
        <title>Organised genome dynamics in the Escherichia coli species results in highly diverse adaptive paths.</title>
        <authorList>
            <person name="Touchon M."/>
            <person name="Hoede C."/>
            <person name="Tenaillon O."/>
            <person name="Barbe V."/>
            <person name="Baeriswyl S."/>
            <person name="Bidet P."/>
            <person name="Bingen E."/>
            <person name="Bonacorsi S."/>
            <person name="Bouchier C."/>
            <person name="Bouvet O."/>
            <person name="Calteau A."/>
            <person name="Chiapello H."/>
            <person name="Clermont O."/>
            <person name="Cruveiller S."/>
            <person name="Danchin A."/>
            <person name="Diard M."/>
            <person name="Dossat C."/>
            <person name="Karoui M.E."/>
            <person name="Frapy E."/>
            <person name="Garry L."/>
            <person name="Ghigo J.M."/>
            <person name="Gilles A.M."/>
            <person name="Johnson J."/>
            <person name="Le Bouguenec C."/>
            <person name="Lescat M."/>
            <person name="Mangenot S."/>
            <person name="Martinez-Jehanne V."/>
            <person name="Matic I."/>
            <person name="Nassif X."/>
            <person name="Oztas S."/>
            <person name="Petit M.A."/>
            <person name="Pichon C."/>
            <person name="Rouy Z."/>
            <person name="Ruf C.S."/>
            <person name="Schneider D."/>
            <person name="Tourret J."/>
            <person name="Vacherie B."/>
            <person name="Vallenet D."/>
            <person name="Medigue C."/>
            <person name="Rocha E.P.C."/>
            <person name="Denamur E."/>
        </authorList>
    </citation>
    <scope>NUCLEOTIDE SEQUENCE [LARGE SCALE GENOMIC DNA]</scope>
    <source>
        <strain>55989 / EAEC</strain>
    </source>
</reference>
<feature type="chain" id="PRO_1000191670" description="Ion-translocating oxidoreductase complex subunit D">
    <location>
        <begin position="1"/>
        <end position="352"/>
    </location>
</feature>
<feature type="transmembrane region" description="Helical" evidence="1">
    <location>
        <begin position="20"/>
        <end position="40"/>
    </location>
</feature>
<feature type="transmembrane region" description="Helical" evidence="1">
    <location>
        <begin position="42"/>
        <end position="62"/>
    </location>
</feature>
<feature type="transmembrane region" description="Helical" evidence="1">
    <location>
        <begin position="78"/>
        <end position="109"/>
    </location>
</feature>
<feature type="transmembrane region" description="Helical" evidence="1">
    <location>
        <begin position="123"/>
        <end position="143"/>
    </location>
</feature>
<feature type="transmembrane region" description="Helical" evidence="1">
    <location>
        <begin position="148"/>
        <end position="168"/>
    </location>
</feature>
<feature type="transmembrane region" description="Helical" evidence="1">
    <location>
        <begin position="214"/>
        <end position="234"/>
    </location>
</feature>
<feature type="transmembrane region" description="Helical" evidence="1">
    <location>
        <begin position="242"/>
        <end position="262"/>
    </location>
</feature>
<feature type="transmembrane region" description="Helical" evidence="1">
    <location>
        <begin position="267"/>
        <end position="287"/>
    </location>
</feature>
<feature type="transmembrane region" description="Helical" evidence="1">
    <location>
        <begin position="301"/>
        <end position="321"/>
    </location>
</feature>
<feature type="transmembrane region" description="Helical" evidence="1">
    <location>
        <begin position="322"/>
        <end position="342"/>
    </location>
</feature>
<feature type="modified residue" description="FMN phosphoryl threonine" evidence="1">
    <location>
        <position position="187"/>
    </location>
</feature>
<protein>
    <recommendedName>
        <fullName evidence="1">Ion-translocating oxidoreductase complex subunit D</fullName>
        <ecNumber evidence="1">7.-.-.-</ecNumber>
    </recommendedName>
    <alternativeName>
        <fullName evidence="1">Rsx electron transport complex subunit D</fullName>
    </alternativeName>
</protein>
<comment type="function">
    <text evidence="1">Part of a membrane-bound complex that couples electron transfer with translocation of ions across the membrane. Required to maintain the reduced state of SoxR.</text>
</comment>
<comment type="cofactor">
    <cofactor evidence="1">
        <name>FMN</name>
        <dbReference type="ChEBI" id="CHEBI:58210"/>
    </cofactor>
</comment>
<comment type="subunit">
    <text evidence="1">The complex is composed of six subunits: RsxA, RsxB, RsxC, RsxD, RsxE and RsxG.</text>
</comment>
<comment type="subcellular location">
    <subcellularLocation>
        <location evidence="1">Cell inner membrane</location>
        <topology evidence="1">Multi-pass membrane protein</topology>
    </subcellularLocation>
</comment>
<comment type="similarity">
    <text evidence="1">Belongs to the NqrB/RnfD family.</text>
</comment>
<name>RSXD_ECO55</name>
<dbReference type="EC" id="7.-.-.-" evidence="1"/>
<dbReference type="EMBL" id="CU928145">
    <property type="protein sequence ID" value="CAU97650.1"/>
    <property type="molecule type" value="Genomic_DNA"/>
</dbReference>
<dbReference type="RefSeq" id="WP_000231922.1">
    <property type="nucleotide sequence ID" value="NC_011748.1"/>
</dbReference>
<dbReference type="SMR" id="B7L5I3"/>
<dbReference type="KEGG" id="eck:EC55989_1798"/>
<dbReference type="HOGENOM" id="CLU_042020_0_0_6"/>
<dbReference type="Proteomes" id="UP000000746">
    <property type="component" value="Chromosome"/>
</dbReference>
<dbReference type="GO" id="GO:0005886">
    <property type="term" value="C:plasma membrane"/>
    <property type="evidence" value="ECO:0007669"/>
    <property type="project" value="UniProtKB-SubCell"/>
</dbReference>
<dbReference type="GO" id="GO:0022900">
    <property type="term" value="P:electron transport chain"/>
    <property type="evidence" value="ECO:0007669"/>
    <property type="project" value="UniProtKB-UniRule"/>
</dbReference>
<dbReference type="GO" id="GO:0055085">
    <property type="term" value="P:transmembrane transport"/>
    <property type="evidence" value="ECO:0007669"/>
    <property type="project" value="InterPro"/>
</dbReference>
<dbReference type="HAMAP" id="MF_00462">
    <property type="entry name" value="RsxD_RnfD"/>
    <property type="match status" value="1"/>
</dbReference>
<dbReference type="InterPro" id="IPR004338">
    <property type="entry name" value="NqrB/RnfD"/>
</dbReference>
<dbReference type="InterPro" id="IPR011303">
    <property type="entry name" value="RnfD_bac"/>
</dbReference>
<dbReference type="NCBIfam" id="NF002011">
    <property type="entry name" value="PRK00816.1"/>
    <property type="match status" value="1"/>
</dbReference>
<dbReference type="NCBIfam" id="TIGR01946">
    <property type="entry name" value="rnfD"/>
    <property type="match status" value="1"/>
</dbReference>
<dbReference type="PANTHER" id="PTHR30578">
    <property type="entry name" value="ELECTRON TRANSPORT COMPLEX PROTEIN RNFD"/>
    <property type="match status" value="1"/>
</dbReference>
<dbReference type="PANTHER" id="PTHR30578:SF0">
    <property type="entry name" value="ION-TRANSLOCATING OXIDOREDUCTASE COMPLEX SUBUNIT D"/>
    <property type="match status" value="1"/>
</dbReference>
<dbReference type="Pfam" id="PF03116">
    <property type="entry name" value="NQR2_RnfD_RnfE"/>
    <property type="match status" value="1"/>
</dbReference>
<proteinExistence type="inferred from homology"/>
<accession>B7L5I3</accession>
<gene>
    <name evidence="1" type="primary">rsxD</name>
    <name type="ordered locus">EC55989_1798</name>
</gene>
<organism>
    <name type="scientific">Escherichia coli (strain 55989 / EAEC)</name>
    <dbReference type="NCBI Taxonomy" id="585055"/>
    <lineage>
        <taxon>Bacteria</taxon>
        <taxon>Pseudomonadati</taxon>
        <taxon>Pseudomonadota</taxon>
        <taxon>Gammaproteobacteria</taxon>
        <taxon>Enterobacterales</taxon>
        <taxon>Enterobacteriaceae</taxon>
        <taxon>Escherichia</taxon>
    </lineage>
</organism>
<keyword id="KW-0997">Cell inner membrane</keyword>
<keyword id="KW-1003">Cell membrane</keyword>
<keyword id="KW-0249">Electron transport</keyword>
<keyword id="KW-0285">Flavoprotein</keyword>
<keyword id="KW-0288">FMN</keyword>
<keyword id="KW-0472">Membrane</keyword>
<keyword id="KW-0597">Phosphoprotein</keyword>
<keyword id="KW-1185">Reference proteome</keyword>
<keyword id="KW-1278">Translocase</keyword>
<keyword id="KW-0812">Transmembrane</keyword>
<keyword id="KW-1133">Transmembrane helix</keyword>
<keyword id="KW-0813">Transport</keyword>
<evidence type="ECO:0000255" key="1">
    <source>
        <dbReference type="HAMAP-Rule" id="MF_00462"/>
    </source>
</evidence>